<dbReference type="EMBL" id="AM933172">
    <property type="protein sequence ID" value="CAR34696.1"/>
    <property type="molecule type" value="Genomic_DNA"/>
</dbReference>
<dbReference type="RefSeq" id="WP_001040199.1">
    <property type="nucleotide sequence ID" value="NC_011294.1"/>
</dbReference>
<dbReference type="SMR" id="B5QZV7"/>
<dbReference type="KEGG" id="set:SEN3120"/>
<dbReference type="HOGENOM" id="CLU_089475_5_0_6"/>
<dbReference type="Proteomes" id="UP000000613">
    <property type="component" value="Chromosome"/>
</dbReference>
<dbReference type="GO" id="GO:0005829">
    <property type="term" value="C:cytosol"/>
    <property type="evidence" value="ECO:0007669"/>
    <property type="project" value="TreeGrafter"/>
</dbReference>
<dbReference type="GO" id="GO:0043024">
    <property type="term" value="F:ribosomal small subunit binding"/>
    <property type="evidence" value="ECO:0007669"/>
    <property type="project" value="TreeGrafter"/>
</dbReference>
<dbReference type="GO" id="GO:0030490">
    <property type="term" value="P:maturation of SSU-rRNA"/>
    <property type="evidence" value="ECO:0007669"/>
    <property type="project" value="UniProtKB-UniRule"/>
</dbReference>
<dbReference type="FunFam" id="3.30.300.20:FF:000007">
    <property type="entry name" value="Ribosome-binding factor A"/>
    <property type="match status" value="1"/>
</dbReference>
<dbReference type="Gene3D" id="3.30.300.20">
    <property type="match status" value="1"/>
</dbReference>
<dbReference type="HAMAP" id="MF_00003">
    <property type="entry name" value="RbfA"/>
    <property type="match status" value="1"/>
</dbReference>
<dbReference type="InterPro" id="IPR015946">
    <property type="entry name" value="KH_dom-like_a/b"/>
</dbReference>
<dbReference type="InterPro" id="IPR000238">
    <property type="entry name" value="RbfA"/>
</dbReference>
<dbReference type="InterPro" id="IPR023799">
    <property type="entry name" value="RbfA_dom_sf"/>
</dbReference>
<dbReference type="InterPro" id="IPR020053">
    <property type="entry name" value="Ribosome-bd_factorA_CS"/>
</dbReference>
<dbReference type="NCBIfam" id="TIGR00082">
    <property type="entry name" value="rbfA"/>
    <property type="match status" value="1"/>
</dbReference>
<dbReference type="PANTHER" id="PTHR33515">
    <property type="entry name" value="RIBOSOME-BINDING FACTOR A, CHLOROPLASTIC-RELATED"/>
    <property type="match status" value="1"/>
</dbReference>
<dbReference type="PANTHER" id="PTHR33515:SF1">
    <property type="entry name" value="RIBOSOME-BINDING FACTOR A, CHLOROPLASTIC-RELATED"/>
    <property type="match status" value="1"/>
</dbReference>
<dbReference type="Pfam" id="PF02033">
    <property type="entry name" value="RBFA"/>
    <property type="match status" value="1"/>
</dbReference>
<dbReference type="SUPFAM" id="SSF89919">
    <property type="entry name" value="Ribosome-binding factor A, RbfA"/>
    <property type="match status" value="1"/>
</dbReference>
<dbReference type="PROSITE" id="PS01319">
    <property type="entry name" value="RBFA"/>
    <property type="match status" value="1"/>
</dbReference>
<feature type="chain" id="PRO_1000088925" description="Ribosome-binding factor A">
    <location>
        <begin position="1"/>
        <end position="133"/>
    </location>
</feature>
<organism>
    <name type="scientific">Salmonella enteritidis PT4 (strain P125109)</name>
    <dbReference type="NCBI Taxonomy" id="550537"/>
    <lineage>
        <taxon>Bacteria</taxon>
        <taxon>Pseudomonadati</taxon>
        <taxon>Pseudomonadota</taxon>
        <taxon>Gammaproteobacteria</taxon>
        <taxon>Enterobacterales</taxon>
        <taxon>Enterobacteriaceae</taxon>
        <taxon>Salmonella</taxon>
    </lineage>
</organism>
<evidence type="ECO:0000255" key="1">
    <source>
        <dbReference type="HAMAP-Rule" id="MF_00003"/>
    </source>
</evidence>
<protein>
    <recommendedName>
        <fullName evidence="1">Ribosome-binding factor A</fullName>
    </recommendedName>
</protein>
<accession>B5QZV7</accession>
<comment type="function">
    <text evidence="1">One of several proteins that assist in the late maturation steps of the functional core of the 30S ribosomal subunit. Associates with free 30S ribosomal subunits (but not with 30S subunits that are part of 70S ribosomes or polysomes). Required for efficient processing of 16S rRNA. May interact with the 5'-terminal helix region of 16S rRNA.</text>
</comment>
<comment type="subunit">
    <text evidence="1">Monomer. Binds 30S ribosomal subunits, but not 50S ribosomal subunits or 70S ribosomes.</text>
</comment>
<comment type="subcellular location">
    <subcellularLocation>
        <location evidence="1">Cytoplasm</location>
    </subcellularLocation>
</comment>
<comment type="similarity">
    <text evidence="1">Belongs to the RbfA family.</text>
</comment>
<reference key="1">
    <citation type="journal article" date="2008" name="Genome Res.">
        <title>Comparative genome analysis of Salmonella enteritidis PT4 and Salmonella gallinarum 287/91 provides insights into evolutionary and host adaptation pathways.</title>
        <authorList>
            <person name="Thomson N.R."/>
            <person name="Clayton D.J."/>
            <person name="Windhorst D."/>
            <person name="Vernikos G."/>
            <person name="Davidson S."/>
            <person name="Churcher C."/>
            <person name="Quail M.A."/>
            <person name="Stevens M."/>
            <person name="Jones M.A."/>
            <person name="Watson M."/>
            <person name="Barron A."/>
            <person name="Layton A."/>
            <person name="Pickard D."/>
            <person name="Kingsley R.A."/>
            <person name="Bignell A."/>
            <person name="Clark L."/>
            <person name="Harris B."/>
            <person name="Ormond D."/>
            <person name="Abdellah Z."/>
            <person name="Brooks K."/>
            <person name="Cherevach I."/>
            <person name="Chillingworth T."/>
            <person name="Woodward J."/>
            <person name="Norberczak H."/>
            <person name="Lord A."/>
            <person name="Arrowsmith C."/>
            <person name="Jagels K."/>
            <person name="Moule S."/>
            <person name="Mungall K."/>
            <person name="Saunders M."/>
            <person name="Whitehead S."/>
            <person name="Chabalgoity J.A."/>
            <person name="Maskell D."/>
            <person name="Humphreys T."/>
            <person name="Roberts M."/>
            <person name="Barrow P.A."/>
            <person name="Dougan G."/>
            <person name="Parkhill J."/>
        </authorList>
    </citation>
    <scope>NUCLEOTIDE SEQUENCE [LARGE SCALE GENOMIC DNA]</scope>
    <source>
        <strain>P125109</strain>
    </source>
</reference>
<keyword id="KW-0963">Cytoplasm</keyword>
<keyword id="KW-0690">Ribosome biogenesis</keyword>
<name>RBFA_SALEP</name>
<proteinExistence type="inferred from homology"/>
<sequence>MAKEFGRPQRVAQEMQKEIAIILQREIKDPRLGMMTTVSGVEMSRDLAYAKVFVTFLNDKDEDAVKAGIKALQEASGFIRSLLGKAMRLRIVPELTFFYDNSLVEGMRMSNLVTNVVKHDEERRVNPDDSKED</sequence>
<gene>
    <name evidence="1" type="primary">rbfA</name>
    <name type="ordered locus">SEN3120</name>
</gene>